<protein>
    <recommendedName>
        <fullName evidence="1">Holliday junction branch migration complex subunit RuvB</fullName>
        <ecNumber evidence="1">3.6.4.-</ecNumber>
    </recommendedName>
</protein>
<sequence length="352" mass="38933">MIEPDRLISAVSGRERDEQLDRAIRPLKLADYIGQPSVREQMELFIHAARGRQEALDHTLIFGPPGLGKTTLANIIAQEMGVSIKSTSGPVLERPGDLAALLTNLEAGDVLFVDEIHRLSPIVEEVLYPAMEDFQLDIMIGEGPAARSIKLDLPPFTLVGATTRAGMLTNPLRDRFGIVQRLEFYNVEDLATIVSRSAGILGLEIEPQGAAEIAKRARGTPRIANRLLRRVRDFAEVRGQGDITRVIADKALNLLDVDERGFDHLDRRLLLTMIDKFDGGPVGIDNLAAALSEERHTIEDVLEPYLIQQGYIMRTPRGRVVTRHAYLHFGLNIPKRLGPGVTTDLFTSEDGN</sequence>
<comment type="function">
    <text evidence="1">The RuvA-RuvB-RuvC complex processes Holliday junction (HJ) DNA during genetic recombination and DNA repair, while the RuvA-RuvB complex plays an important role in the rescue of blocked DNA replication forks via replication fork reversal (RFR). RuvA specifically binds to HJ cruciform DNA, conferring on it an open structure. The RuvB hexamer acts as an ATP-dependent pump, pulling dsDNA into and through the RuvAB complex. RuvB forms 2 homohexamers on either side of HJ DNA bound by 1 or 2 RuvA tetramers; 4 subunits per hexamer contact DNA at a time. Coordinated motions by a converter formed by DNA-disengaged RuvB subunits stimulates ATP hydrolysis and nucleotide exchange. Immobilization of the converter enables RuvB to convert the ATP-contained energy into a lever motion, pulling 2 nucleotides of DNA out of the RuvA tetramer per ATP hydrolyzed, thus driving DNA branch migration. The RuvB motors rotate together with the DNA substrate, which together with the progressing nucleotide cycle form the mechanistic basis for DNA recombination by continuous HJ branch migration. Branch migration allows RuvC to scan DNA until it finds its consensus sequence, where it cleaves and resolves cruciform DNA.</text>
</comment>
<comment type="function">
    <text evidence="2">The RuvA-RuvB complex in the presence of ATP renatures cruciform structure in supercoiled DNA with palindromic sequence, indicating that it may promote strand exchange reactions in homologous recombination. Complements an E.coli deletion mutant (PubMed:8982068).</text>
</comment>
<comment type="catalytic activity">
    <reaction evidence="1">
        <text>ATP + H2O = ADP + phosphate + H(+)</text>
        <dbReference type="Rhea" id="RHEA:13065"/>
        <dbReference type="ChEBI" id="CHEBI:15377"/>
        <dbReference type="ChEBI" id="CHEBI:15378"/>
        <dbReference type="ChEBI" id="CHEBI:30616"/>
        <dbReference type="ChEBI" id="CHEBI:43474"/>
        <dbReference type="ChEBI" id="CHEBI:456216"/>
    </reaction>
</comment>
<comment type="subunit">
    <text evidence="1">Homohexamer. Forms an RuvA(8)-RuvB(12)-Holliday junction (HJ) complex. HJ DNA is sandwiched between 2 RuvA tetramers; dsDNA enters through RuvA and exits via RuvB. An RuvB hexamer assembles on each DNA strand where it exits the tetramer. Each RuvB hexamer is contacted by two RuvA subunits (via domain III) on 2 adjacent RuvB subunits; this complex drives branch migration. In the full resolvosome a probable DNA-RuvA(4)-RuvB(12)-RuvC(2) complex forms which resolves the HJ.</text>
</comment>
<comment type="subcellular location">
    <subcellularLocation>
        <location evidence="1">Cytoplasm</location>
    </subcellularLocation>
</comment>
<comment type="domain">
    <text evidence="1">Has 3 domains, the large (RuvB-L) and small ATPase (RuvB-S) domains and the C-terminal head (RuvB-H) domain. The head domain binds DNA, while the ATPase domains jointly bind ATP, ADP or are empty depending on the state of the subunit in the translocation cycle. During a single DNA translocation step the structure of each domain remains the same, but their relative positions change.</text>
</comment>
<comment type="miscellaneous">
    <text evidence="2">Probably part of a ruvC-ruvA-ruvB operon. Does not seem to belong to the SOS regulon, no LexA binding site has been identified in the promoter region.</text>
</comment>
<comment type="similarity">
    <text evidence="1">Belongs to the RuvB family.</text>
</comment>
<dbReference type="EC" id="3.6.4.-" evidence="1"/>
<dbReference type="EMBL" id="D83138">
    <property type="protein sequence ID" value="BAA11819.1"/>
    <property type="molecule type" value="Genomic_DNA"/>
</dbReference>
<dbReference type="EMBL" id="AE004091">
    <property type="protein sequence ID" value="AAG04356.1"/>
    <property type="molecule type" value="Genomic_DNA"/>
</dbReference>
<dbReference type="PIR" id="A83525">
    <property type="entry name" value="A83525"/>
</dbReference>
<dbReference type="RefSeq" id="NP_249658.1">
    <property type="nucleotide sequence ID" value="NC_002516.2"/>
</dbReference>
<dbReference type="RefSeq" id="WP_003086123.1">
    <property type="nucleotide sequence ID" value="NZ_QZGE01000007.1"/>
</dbReference>
<dbReference type="PDB" id="6BLB">
    <property type="method" value="X-ray"/>
    <property type="resolution" value="1.88 A"/>
    <property type="chains" value="A=1-352"/>
</dbReference>
<dbReference type="PDB" id="7X5B">
    <property type="method" value="X-ray"/>
    <property type="resolution" value="2.16 A"/>
    <property type="chains" value="A=1-352"/>
</dbReference>
<dbReference type="PDB" id="7X7P">
    <property type="method" value="EM"/>
    <property type="resolution" value="7.02 A"/>
    <property type="chains" value="M/N/O/P=22-334"/>
</dbReference>
<dbReference type="PDB" id="7X7Q">
    <property type="method" value="EM"/>
    <property type="resolution" value="7.02 A"/>
    <property type="chains" value="M/N/O/P=1-352"/>
</dbReference>
<dbReference type="PDBsum" id="6BLB"/>
<dbReference type="PDBsum" id="7X5B"/>
<dbReference type="PDBsum" id="7X7P"/>
<dbReference type="PDBsum" id="7X7Q"/>
<dbReference type="EMDB" id="EMD-33043"/>
<dbReference type="EMDB" id="EMD-33044"/>
<dbReference type="SMR" id="Q51426"/>
<dbReference type="FunCoup" id="Q51426">
    <property type="interactions" value="300"/>
</dbReference>
<dbReference type="STRING" id="208964.PA0967"/>
<dbReference type="PaxDb" id="208964-PA0967"/>
<dbReference type="GeneID" id="882028"/>
<dbReference type="KEGG" id="pae:PA0967"/>
<dbReference type="PATRIC" id="fig|208964.12.peg.1005"/>
<dbReference type="PseudoCAP" id="PA0967"/>
<dbReference type="HOGENOM" id="CLU_055599_1_0_6"/>
<dbReference type="InParanoid" id="Q51426"/>
<dbReference type="OrthoDB" id="9804478at2"/>
<dbReference type="PhylomeDB" id="Q51426"/>
<dbReference type="BioCyc" id="PAER208964:G1FZ6-988-MONOMER"/>
<dbReference type="Proteomes" id="UP000002438">
    <property type="component" value="Chromosome"/>
</dbReference>
<dbReference type="GO" id="GO:0005737">
    <property type="term" value="C:cytoplasm"/>
    <property type="evidence" value="ECO:0007669"/>
    <property type="project" value="UniProtKB-SubCell"/>
</dbReference>
<dbReference type="GO" id="GO:0048476">
    <property type="term" value="C:Holliday junction resolvase complex"/>
    <property type="evidence" value="ECO:0007669"/>
    <property type="project" value="UniProtKB-UniRule"/>
</dbReference>
<dbReference type="GO" id="GO:0005524">
    <property type="term" value="F:ATP binding"/>
    <property type="evidence" value="ECO:0007669"/>
    <property type="project" value="UniProtKB-UniRule"/>
</dbReference>
<dbReference type="GO" id="GO:0016887">
    <property type="term" value="F:ATP hydrolysis activity"/>
    <property type="evidence" value="ECO:0007669"/>
    <property type="project" value="InterPro"/>
</dbReference>
<dbReference type="GO" id="GO:0000400">
    <property type="term" value="F:four-way junction DNA binding"/>
    <property type="evidence" value="ECO:0007669"/>
    <property type="project" value="UniProtKB-UniRule"/>
</dbReference>
<dbReference type="GO" id="GO:0009378">
    <property type="term" value="F:four-way junction helicase activity"/>
    <property type="evidence" value="ECO:0007669"/>
    <property type="project" value="InterPro"/>
</dbReference>
<dbReference type="GO" id="GO:0071247">
    <property type="term" value="P:cellular response to chromate"/>
    <property type="evidence" value="ECO:0000315"/>
    <property type="project" value="PseudoCAP"/>
</dbReference>
<dbReference type="GO" id="GO:0072715">
    <property type="term" value="P:cellular response to selenite ion"/>
    <property type="evidence" value="ECO:0000315"/>
    <property type="project" value="PseudoCAP"/>
</dbReference>
<dbReference type="GO" id="GO:0006310">
    <property type="term" value="P:DNA recombination"/>
    <property type="evidence" value="ECO:0007669"/>
    <property type="project" value="UniProtKB-UniRule"/>
</dbReference>
<dbReference type="GO" id="GO:0006281">
    <property type="term" value="P:DNA repair"/>
    <property type="evidence" value="ECO:0000315"/>
    <property type="project" value="PseudoCAP"/>
</dbReference>
<dbReference type="CDD" id="cd00009">
    <property type="entry name" value="AAA"/>
    <property type="match status" value="1"/>
</dbReference>
<dbReference type="FunFam" id="1.10.10.10:FF:000086">
    <property type="entry name" value="Holliday junction ATP-dependent DNA helicase RuvB"/>
    <property type="match status" value="1"/>
</dbReference>
<dbReference type="FunFam" id="1.10.8.60:FF:000023">
    <property type="entry name" value="Holliday junction ATP-dependent DNA helicase RuvB"/>
    <property type="match status" value="1"/>
</dbReference>
<dbReference type="FunFam" id="3.40.50.300:FF:000073">
    <property type="entry name" value="Holliday junction ATP-dependent DNA helicase RuvB"/>
    <property type="match status" value="1"/>
</dbReference>
<dbReference type="Gene3D" id="1.10.8.60">
    <property type="match status" value="1"/>
</dbReference>
<dbReference type="Gene3D" id="3.40.50.300">
    <property type="entry name" value="P-loop containing nucleotide triphosphate hydrolases"/>
    <property type="match status" value="1"/>
</dbReference>
<dbReference type="Gene3D" id="1.10.10.10">
    <property type="entry name" value="Winged helix-like DNA-binding domain superfamily/Winged helix DNA-binding domain"/>
    <property type="match status" value="1"/>
</dbReference>
<dbReference type="HAMAP" id="MF_00016">
    <property type="entry name" value="DNA_HJ_migration_RuvB"/>
    <property type="match status" value="1"/>
</dbReference>
<dbReference type="InterPro" id="IPR003593">
    <property type="entry name" value="AAA+_ATPase"/>
</dbReference>
<dbReference type="InterPro" id="IPR041445">
    <property type="entry name" value="AAA_lid_4"/>
</dbReference>
<dbReference type="InterPro" id="IPR004605">
    <property type="entry name" value="DNA_helicase_Holl-junc_RuvB"/>
</dbReference>
<dbReference type="InterPro" id="IPR027417">
    <property type="entry name" value="P-loop_NTPase"/>
</dbReference>
<dbReference type="InterPro" id="IPR008824">
    <property type="entry name" value="RuvB-like_N"/>
</dbReference>
<dbReference type="InterPro" id="IPR008823">
    <property type="entry name" value="RuvB_C"/>
</dbReference>
<dbReference type="InterPro" id="IPR036388">
    <property type="entry name" value="WH-like_DNA-bd_sf"/>
</dbReference>
<dbReference type="InterPro" id="IPR036390">
    <property type="entry name" value="WH_DNA-bd_sf"/>
</dbReference>
<dbReference type="NCBIfam" id="NF000868">
    <property type="entry name" value="PRK00080.1"/>
    <property type="match status" value="1"/>
</dbReference>
<dbReference type="NCBIfam" id="TIGR00635">
    <property type="entry name" value="ruvB"/>
    <property type="match status" value="1"/>
</dbReference>
<dbReference type="PANTHER" id="PTHR42848">
    <property type="match status" value="1"/>
</dbReference>
<dbReference type="PANTHER" id="PTHR42848:SF1">
    <property type="entry name" value="HOLLIDAY JUNCTION BRANCH MIGRATION COMPLEX SUBUNIT RUVB"/>
    <property type="match status" value="1"/>
</dbReference>
<dbReference type="Pfam" id="PF17864">
    <property type="entry name" value="AAA_lid_4"/>
    <property type="match status" value="1"/>
</dbReference>
<dbReference type="Pfam" id="PF05491">
    <property type="entry name" value="RuvB_C"/>
    <property type="match status" value="1"/>
</dbReference>
<dbReference type="Pfam" id="PF05496">
    <property type="entry name" value="RuvB_N"/>
    <property type="match status" value="1"/>
</dbReference>
<dbReference type="SMART" id="SM00382">
    <property type="entry name" value="AAA"/>
    <property type="match status" value="1"/>
</dbReference>
<dbReference type="SUPFAM" id="SSF52540">
    <property type="entry name" value="P-loop containing nucleoside triphosphate hydrolases"/>
    <property type="match status" value="1"/>
</dbReference>
<dbReference type="SUPFAM" id="SSF46785">
    <property type="entry name" value="Winged helix' DNA-binding domain"/>
    <property type="match status" value="1"/>
</dbReference>
<keyword id="KW-0002">3D-structure</keyword>
<keyword id="KW-0067">ATP-binding</keyword>
<keyword id="KW-0963">Cytoplasm</keyword>
<keyword id="KW-0227">DNA damage</keyword>
<keyword id="KW-0233">DNA recombination</keyword>
<keyword id="KW-0234">DNA repair</keyword>
<keyword id="KW-0238">DNA-binding</keyword>
<keyword id="KW-0378">Hydrolase</keyword>
<keyword id="KW-0547">Nucleotide-binding</keyword>
<keyword id="KW-1185">Reference proteome</keyword>
<feature type="chain" id="PRO_0000165578" description="Holliday junction branch migration complex subunit RuvB">
    <location>
        <begin position="1"/>
        <end position="352"/>
    </location>
</feature>
<feature type="region of interest" description="Large ATPase domain (RuvB-L)" evidence="1">
    <location>
        <begin position="4"/>
        <end position="185"/>
    </location>
</feature>
<feature type="region of interest" description="Small ATPAse domain (RuvB-S)" evidence="1">
    <location>
        <begin position="186"/>
        <end position="256"/>
    </location>
</feature>
<feature type="region of interest" description="Head domain (RuvB-H)" evidence="1">
    <location>
        <begin position="259"/>
        <end position="352"/>
    </location>
</feature>
<feature type="binding site" evidence="1">
    <location>
        <position position="24"/>
    </location>
    <ligand>
        <name>ATP</name>
        <dbReference type="ChEBI" id="CHEBI:30616"/>
    </ligand>
</feature>
<feature type="binding site" evidence="1">
    <location>
        <position position="25"/>
    </location>
    <ligand>
        <name>ATP</name>
        <dbReference type="ChEBI" id="CHEBI:30616"/>
    </ligand>
</feature>
<feature type="binding site" evidence="5">
    <location>
        <position position="33"/>
    </location>
    <ligand>
        <name>ADP</name>
        <dbReference type="ChEBI" id="CHEBI:456216"/>
    </ligand>
</feature>
<feature type="binding site" evidence="5">
    <location>
        <begin position="66"/>
        <end position="71"/>
    </location>
    <ligand>
        <name>ADP</name>
        <dbReference type="ChEBI" id="CHEBI:456216"/>
    </ligand>
</feature>
<feature type="binding site" evidence="1">
    <location>
        <position position="66"/>
    </location>
    <ligand>
        <name>ATP</name>
        <dbReference type="ChEBI" id="CHEBI:30616"/>
    </ligand>
</feature>
<feature type="binding site" evidence="1">
    <location>
        <position position="69"/>
    </location>
    <ligand>
        <name>ATP</name>
        <dbReference type="ChEBI" id="CHEBI:30616"/>
    </ligand>
</feature>
<feature type="binding site" evidence="1">
    <location>
        <position position="70"/>
    </location>
    <ligand>
        <name>ATP</name>
        <dbReference type="ChEBI" id="CHEBI:30616"/>
    </ligand>
</feature>
<feature type="binding site" evidence="1">
    <location>
        <position position="70"/>
    </location>
    <ligand>
        <name>Mg(2+)</name>
        <dbReference type="ChEBI" id="CHEBI:18420"/>
    </ligand>
</feature>
<feature type="binding site" evidence="1">
    <location>
        <position position="71"/>
    </location>
    <ligand>
        <name>ATP</name>
        <dbReference type="ChEBI" id="CHEBI:30616"/>
    </ligand>
</feature>
<feature type="binding site" evidence="1">
    <location>
        <begin position="132"/>
        <end position="134"/>
    </location>
    <ligand>
        <name>ATP</name>
        <dbReference type="ChEBI" id="CHEBI:30616"/>
    </ligand>
</feature>
<feature type="binding site" evidence="1">
    <location>
        <position position="175"/>
    </location>
    <ligand>
        <name>ATP</name>
        <dbReference type="ChEBI" id="CHEBI:30616"/>
    </ligand>
</feature>
<feature type="binding site" evidence="1 5">
    <location>
        <position position="185"/>
    </location>
    <ligand>
        <name>ADP</name>
        <dbReference type="ChEBI" id="CHEBI:456216"/>
    </ligand>
</feature>
<feature type="binding site" evidence="1">
    <location>
        <position position="222"/>
    </location>
    <ligand>
        <name>ATP</name>
        <dbReference type="ChEBI" id="CHEBI:30616"/>
    </ligand>
</feature>
<feature type="binding site" evidence="1">
    <location>
        <position position="295"/>
    </location>
    <ligand>
        <name>DNA</name>
        <dbReference type="ChEBI" id="CHEBI:16991"/>
    </ligand>
</feature>
<feature type="binding site" evidence="1">
    <location>
        <position position="314"/>
    </location>
    <ligand>
        <name>DNA</name>
        <dbReference type="ChEBI" id="CHEBI:16991"/>
    </ligand>
</feature>
<feature type="binding site" evidence="1">
    <location>
        <position position="319"/>
    </location>
    <ligand>
        <name>DNA</name>
        <dbReference type="ChEBI" id="CHEBI:16991"/>
    </ligand>
</feature>
<feature type="sequence conflict" description="In Ref. 1; BAA11819." evidence="4" ref="1">
    <original>A</original>
    <variation>G</variation>
    <location>
        <position position="146"/>
    </location>
</feature>
<feature type="helix" evidence="7">
    <location>
        <begin position="29"/>
        <end position="31"/>
    </location>
</feature>
<feature type="helix" evidence="7">
    <location>
        <begin position="36"/>
        <end position="51"/>
    </location>
</feature>
<feature type="strand" evidence="7">
    <location>
        <begin position="59"/>
        <end position="64"/>
    </location>
</feature>
<feature type="helix" evidence="7">
    <location>
        <begin position="69"/>
        <end position="80"/>
    </location>
</feature>
<feature type="strand" evidence="7">
    <location>
        <begin position="84"/>
        <end position="88"/>
    </location>
</feature>
<feature type="turn" evidence="7">
    <location>
        <begin position="89"/>
        <end position="91"/>
    </location>
</feature>
<feature type="helix" evidence="7">
    <location>
        <begin position="95"/>
        <end position="102"/>
    </location>
</feature>
<feature type="strand" evidence="7">
    <location>
        <begin position="110"/>
        <end position="114"/>
    </location>
</feature>
<feature type="helix" evidence="7">
    <location>
        <begin position="116"/>
        <end position="118"/>
    </location>
</feature>
<feature type="helix" evidence="7">
    <location>
        <begin position="121"/>
        <end position="133"/>
    </location>
</feature>
<feature type="strand" evidence="7">
    <location>
        <begin position="134"/>
        <end position="139"/>
    </location>
</feature>
<feature type="strand" evidence="7">
    <location>
        <begin position="148"/>
        <end position="152"/>
    </location>
</feature>
<feature type="strand" evidence="7">
    <location>
        <begin position="157"/>
        <end position="163"/>
    </location>
</feature>
<feature type="helix" evidence="7">
    <location>
        <begin position="165"/>
        <end position="167"/>
    </location>
</feature>
<feature type="helix" evidence="7">
    <location>
        <begin position="170"/>
        <end position="174"/>
    </location>
</feature>
<feature type="strand" evidence="7">
    <location>
        <begin position="177"/>
        <end position="181"/>
    </location>
</feature>
<feature type="helix" evidence="7">
    <location>
        <begin position="187"/>
        <end position="200"/>
    </location>
</feature>
<feature type="helix" evidence="7">
    <location>
        <begin position="207"/>
        <end position="215"/>
    </location>
</feature>
<feature type="helix" evidence="7">
    <location>
        <begin position="221"/>
        <end position="238"/>
    </location>
</feature>
<feature type="strand" evidence="7">
    <location>
        <begin position="239"/>
        <end position="243"/>
    </location>
</feature>
<feature type="helix" evidence="7">
    <location>
        <begin position="245"/>
        <end position="254"/>
    </location>
</feature>
<feature type="helix" evidence="7">
    <location>
        <begin position="264"/>
        <end position="277"/>
    </location>
</feature>
<feature type="helix" evidence="7">
    <location>
        <begin position="284"/>
        <end position="291"/>
    </location>
</feature>
<feature type="helix" evidence="7">
    <location>
        <begin position="295"/>
        <end position="300"/>
    </location>
</feature>
<feature type="helix" evidence="7">
    <location>
        <begin position="303"/>
        <end position="308"/>
    </location>
</feature>
<feature type="strand" evidence="7">
    <location>
        <begin position="311"/>
        <end position="315"/>
    </location>
</feature>
<feature type="strand" evidence="7">
    <location>
        <begin position="318"/>
        <end position="321"/>
    </location>
</feature>
<feature type="helix" evidence="7">
    <location>
        <begin position="323"/>
        <end position="328"/>
    </location>
</feature>
<reference key="1">
    <citation type="journal article" date="1996" name="Gene">
        <title>Molecular analysis of the Pseudomonas aeruginosa genes, ruvA, ruvB and ruvC, involved in processing of homologous recombination intermediates.</title>
        <authorList>
            <person name="Hishida T."/>
            <person name="Iwasaki H."/>
            <person name="Ishioka K."/>
            <person name="Shinagawa H."/>
        </authorList>
    </citation>
    <scope>NUCLEOTIDE SEQUENCE [GENOMIC DNA]</scope>
    <scope>FUNCTION</scope>
    <scope>PROBABLY NOT SOS REGULATED</scope>
    <source>
        <strain>ATCC 15692 / DSM 22644 / CIP 104116 / JCM 14847 / LMG 12228 / 1C / PRS 101 / PAO1</strain>
    </source>
</reference>
<reference key="2">
    <citation type="journal article" date="2000" name="Nature">
        <title>Complete genome sequence of Pseudomonas aeruginosa PAO1, an opportunistic pathogen.</title>
        <authorList>
            <person name="Stover C.K."/>
            <person name="Pham X.-Q.T."/>
            <person name="Erwin A.L."/>
            <person name="Mizoguchi S.D."/>
            <person name="Warrener P."/>
            <person name="Hickey M.J."/>
            <person name="Brinkman F.S.L."/>
            <person name="Hufnagle W.O."/>
            <person name="Kowalik D.J."/>
            <person name="Lagrou M."/>
            <person name="Garber R.L."/>
            <person name="Goltry L."/>
            <person name="Tolentino E."/>
            <person name="Westbrock-Wadman S."/>
            <person name="Yuan Y."/>
            <person name="Brody L.L."/>
            <person name="Coulter S.N."/>
            <person name="Folger K.R."/>
            <person name="Kas A."/>
            <person name="Larbig K."/>
            <person name="Lim R.M."/>
            <person name="Smith K.A."/>
            <person name="Spencer D.H."/>
            <person name="Wong G.K.-S."/>
            <person name="Wu Z."/>
            <person name="Paulsen I.T."/>
            <person name="Reizer J."/>
            <person name="Saier M.H. Jr."/>
            <person name="Hancock R.E.W."/>
            <person name="Lory S."/>
            <person name="Olson M.V."/>
        </authorList>
    </citation>
    <scope>NUCLEOTIDE SEQUENCE [LARGE SCALE GENOMIC DNA]</scope>
    <source>
        <strain>ATCC 15692 / DSM 22644 / CIP 104116 / JCM 14847 / LMG 12228 / 1C / PRS 101 / PAO1</strain>
    </source>
</reference>
<reference evidence="6" key="3">
    <citation type="submission" date="2017-11" db="PDB data bank">
        <title>1.88 Angstrom Resolution Crystal Structure Holliday Junction ATP-dependent DNA Helicase (RuvB) from Pseudomonas aeruginosa in Complex with ADP.</title>
        <authorList>
            <person name="Minasov G."/>
            <person name="Shuvalova L."/>
            <person name="Dubrovska I."/>
            <person name="Kiryukhina O."/>
            <person name="Grimshaw S."/>
            <person name="Kwon K."/>
            <person name="Anderson W.F."/>
            <person name="Satchell K.J.F."/>
            <person name="Joachimiak A."/>
        </authorList>
    </citation>
    <scope>X-RAY CRYSTALLOGRAPHY (1.88 ANGSTROMS) IN COMPLEX WITH ADP</scope>
</reference>
<accession>Q51426</accession>
<accession>Q9I4Z6</accession>
<proteinExistence type="evidence at protein level"/>
<name>RUVB_PSEAE</name>
<gene>
    <name evidence="1 3" type="primary">ruvB</name>
    <name type="ordered locus">PA0967</name>
</gene>
<organism>
    <name type="scientific">Pseudomonas aeruginosa (strain ATCC 15692 / DSM 22644 / CIP 104116 / JCM 14847 / LMG 12228 / 1C / PRS 101 / PAO1)</name>
    <dbReference type="NCBI Taxonomy" id="208964"/>
    <lineage>
        <taxon>Bacteria</taxon>
        <taxon>Pseudomonadati</taxon>
        <taxon>Pseudomonadota</taxon>
        <taxon>Gammaproteobacteria</taxon>
        <taxon>Pseudomonadales</taxon>
        <taxon>Pseudomonadaceae</taxon>
        <taxon>Pseudomonas</taxon>
    </lineage>
</organism>
<evidence type="ECO:0000255" key="1">
    <source>
        <dbReference type="HAMAP-Rule" id="MF_00016"/>
    </source>
</evidence>
<evidence type="ECO:0000269" key="2">
    <source>
    </source>
</evidence>
<evidence type="ECO:0000303" key="3">
    <source>
    </source>
</evidence>
<evidence type="ECO:0000305" key="4"/>
<evidence type="ECO:0000312" key="5">
    <source>
        <dbReference type="PDB" id="6BLB"/>
    </source>
</evidence>
<evidence type="ECO:0007744" key="6">
    <source>
        <dbReference type="PDB" id="6BLB"/>
    </source>
</evidence>
<evidence type="ECO:0007829" key="7">
    <source>
        <dbReference type="PDB" id="6BLB"/>
    </source>
</evidence>